<keyword id="KW-0045">Antibiotic biosynthesis</keyword>
<keyword id="KW-0170">Cobalt</keyword>
<keyword id="KW-0378">Hydrolase</keyword>
<keyword id="KW-0464">Manganese</keyword>
<keyword id="KW-0479">Metal-binding</keyword>
<reference key="1">
    <citation type="journal article" date="1995" name="Mol. Gen. Genet.">
        <title>Cloning and nucleotide sequence of fosfomycin biosynthetic genes of Streptomyces wedmorensis.</title>
        <authorList>
            <person name="Hidaka T."/>
            <person name="Goda M."/>
            <person name="Kuzuyama T."/>
            <person name="Takei N."/>
            <person name="Hidaka M."/>
            <person name="Seto H."/>
        </authorList>
    </citation>
    <scope>NUCLEOTIDE SEQUENCE [GENOMIC DNA]</scope>
    <source>
        <strain>144-91</strain>
    </source>
</reference>
<reference key="2">
    <citation type="journal article" date="2018" name="Biochemistry">
        <title>Biochemical and structural analysis of FomD that catalyzes the hydrolysis of cytidylyl (S)-2-hydroxypropylphosphonate in fosfomycin biosynthesis.</title>
        <authorList>
            <person name="Sato S."/>
            <person name="Miyanaga A."/>
            <person name="Kim S.Y."/>
            <person name="Kuzuyama T."/>
            <person name="Kudo F."/>
            <person name="Eguchi T."/>
        </authorList>
    </citation>
    <scope>FUNCTION</scope>
    <scope>CATALYTIC ACTIVITY</scope>
    <scope>COFACTOR</scope>
    <scope>ACTIVITY REGULATION</scope>
    <scope>BIOPHYSICOCHEMICAL PROPERTIES</scope>
    <scope>PATHWAY</scope>
    <scope>SUBUNIT</scope>
</reference>
<proteinExistence type="evidence at protein level"/>
<sequence length="209" mass="23716">MAEVASQETEFAAFAFGSVVERRDELEGRPWISYPVRVVADTPELVAVYLSHGTLLTFGDGPFSWGPHPWGPFGDRWQSAGILQLHRPGRGHSVWVLRDADTGAFREWYVNVEAPWRRTPTGFSTLDHEIDLVVPADSRTLRWKDVEKFEERARIGHFSPEEATAIRTEAADVAREIAAGEQWWDTSWSRWEPPAGWHALLQSFETEGS</sequence>
<accession>O83033</accession>
<accession>Q56186</accession>
<gene>
    <name evidence="3" type="primary">fomD</name>
</gene>
<feature type="chain" id="PRO_0000459580" description="Cytidylyl-2-hydroxypropylphosphonate hydrolase">
    <location>
        <begin position="1"/>
        <end position="209"/>
    </location>
</feature>
<feature type="active site" description="Proton donor" evidence="1">
    <location>
        <position position="144"/>
    </location>
</feature>
<feature type="binding site" evidence="1">
    <location>
        <position position="111"/>
    </location>
    <ligand>
        <name>a divalent metal cation</name>
        <dbReference type="ChEBI" id="CHEBI:60240"/>
        <label>1</label>
    </ligand>
</feature>
<feature type="binding site" evidence="1">
    <location>
        <position position="127"/>
    </location>
    <ligand>
        <name>a divalent metal cation</name>
        <dbReference type="ChEBI" id="CHEBI:60240"/>
        <label>1</label>
    </ligand>
</feature>
<feature type="binding site" evidence="1">
    <location>
        <position position="129"/>
    </location>
    <ligand>
        <name>a divalent metal cation</name>
        <dbReference type="ChEBI" id="CHEBI:60240"/>
        <label>2</label>
    </ligand>
</feature>
<feature type="binding site" evidence="1">
    <location>
        <position position="131"/>
    </location>
    <ligand>
        <name>a divalent metal cation</name>
        <dbReference type="ChEBI" id="CHEBI:60240"/>
        <label>1</label>
    </ligand>
</feature>
<feature type="binding site" evidence="1">
    <location>
        <position position="131"/>
    </location>
    <ligand>
        <name>a divalent metal cation</name>
        <dbReference type="ChEBI" id="CHEBI:60240"/>
        <label>2</label>
    </ligand>
</feature>
<feature type="binding site" evidence="1">
    <location>
        <position position="145"/>
    </location>
    <ligand>
        <name>a divalent metal cation</name>
        <dbReference type="ChEBI" id="CHEBI:60240"/>
        <label>2</label>
    </ligand>
</feature>
<organism>
    <name type="scientific">Streptomyces wedmorensis</name>
    <dbReference type="NCBI Taxonomy" id="43759"/>
    <lineage>
        <taxon>Bacteria</taxon>
        <taxon>Bacillati</taxon>
        <taxon>Actinomycetota</taxon>
        <taxon>Actinomycetes</taxon>
        <taxon>Kitasatosporales</taxon>
        <taxon>Streptomycetaceae</taxon>
        <taxon>Streptomyces</taxon>
    </lineage>
</organism>
<protein>
    <recommendedName>
        <fullName evidence="4">Cytidylyl-2-hydroxypropylphosphonate hydrolase</fullName>
        <ecNumber evidence="2">3.6.1.-</ecNumber>
    </recommendedName>
</protein>
<comment type="function">
    <text evidence="2">Involved in fosfomycin biosynthesis (PubMed:30010320). Catalyzes the hydrolysis of cytidylyl (S)-2-hydroxypropylphosphonate ((S)-HPP-CMP) to give (S)-2-hydroxypropylphosphonate ((S)-HPP) and CMP (PubMed:30010320). Can also hydrolyze (R)-HPP-CMP and cytidylyl 2-hydroxyethylphosphonate (HEP-CMP), which is a biosynthetic intermediate before C-methylation, but the catalytic efficiency is much higher with (S)-HPP-CMP (PubMed:30010320).</text>
</comment>
<comment type="catalytic activity">
    <reaction evidence="2">
        <text>cytidine 5'-({hydroxy[(S)-2-hydroxypropyl]phosphonoyl}phosphate) + H2O = (S)-2-hydroxypropylphosphonate + CMP + H(+)</text>
        <dbReference type="Rhea" id="RHEA:77231"/>
        <dbReference type="ChEBI" id="CHEBI:15377"/>
        <dbReference type="ChEBI" id="CHEBI:15378"/>
        <dbReference type="ChEBI" id="CHEBI:60377"/>
        <dbReference type="ChEBI" id="CHEBI:62246"/>
        <dbReference type="ChEBI" id="CHEBI:142877"/>
    </reaction>
    <physiologicalReaction direction="left-to-right" evidence="2">
        <dbReference type="Rhea" id="RHEA:77232"/>
    </physiologicalReaction>
</comment>
<comment type="cofactor">
    <cofactor evidence="2">
        <name>Mn(2+)</name>
        <dbReference type="ChEBI" id="CHEBI:29035"/>
    </cofactor>
    <cofactor evidence="2">
        <name>Co(2+)</name>
        <dbReference type="ChEBI" id="CHEBI:48828"/>
    </cofactor>
</comment>
<comment type="activity regulation">
    <text evidence="2">Hydrolysis of (S)-HPP-CMP is inhibited by CDP.</text>
</comment>
<comment type="biophysicochemical properties">
    <kinetics>
        <KM evidence="2">19 uM for (S)-HPP-CMP</KM>
        <KM evidence="2">31 uM for (R)-HPP-CMP</KM>
        <KM evidence="2">52 uM for HEP-CMP</KM>
        <text evidence="2">kcat is 75 sec(-1) with (S)-HPP-CMP as substrate. kcat is 19 sec(-1) with (R)-HPP-CMP as substrate. kcat is 20 sec(-1) with HEP-CMP as substrate.</text>
    </kinetics>
</comment>
<comment type="pathway">
    <text evidence="2">Antibiotic biosynthesis; fosfomycin biosynthesis.</text>
</comment>
<comment type="subunit">
    <text evidence="2">Monomer in solution.</text>
</comment>
<comment type="similarity">
    <text evidence="4">Belongs to the FomD family.</text>
</comment>
<dbReference type="EC" id="3.6.1.-" evidence="2"/>
<dbReference type="EMBL" id="AB016934">
    <property type="protein sequence ID" value="BAA32492.1"/>
    <property type="molecule type" value="Genomic_DNA"/>
</dbReference>
<dbReference type="RefSeq" id="WP_051787062.1">
    <property type="nucleotide sequence ID" value="NZ_JNWK01000026.1"/>
</dbReference>
<dbReference type="SMR" id="O83033"/>
<dbReference type="KEGG" id="ag:BAA32492"/>
<dbReference type="BioCyc" id="MetaCyc:MONOMER-20589"/>
<dbReference type="UniPathway" id="UPA01071"/>
<dbReference type="GO" id="GO:0016787">
    <property type="term" value="F:hydrolase activity"/>
    <property type="evidence" value="ECO:0007669"/>
    <property type="project" value="UniProtKB-KW"/>
</dbReference>
<dbReference type="GO" id="GO:0046872">
    <property type="term" value="F:metal ion binding"/>
    <property type="evidence" value="ECO:0007669"/>
    <property type="project" value="UniProtKB-KW"/>
</dbReference>
<dbReference type="GO" id="GO:0017000">
    <property type="term" value="P:antibiotic biosynthetic process"/>
    <property type="evidence" value="ECO:0007669"/>
    <property type="project" value="UniProtKB-KW"/>
</dbReference>
<dbReference type="Gene3D" id="2.40.380.10">
    <property type="entry name" value="FomD-like"/>
    <property type="match status" value="1"/>
</dbReference>
<dbReference type="InterPro" id="IPR007295">
    <property type="entry name" value="DUF402"/>
</dbReference>
<dbReference type="InterPro" id="IPR035930">
    <property type="entry name" value="FomD-like_sf"/>
</dbReference>
<dbReference type="InterPro" id="IPR050212">
    <property type="entry name" value="Ntdp-like"/>
</dbReference>
<dbReference type="PANTHER" id="PTHR39159">
    <property type="match status" value="1"/>
</dbReference>
<dbReference type="PANTHER" id="PTHR39159:SF1">
    <property type="entry name" value="UPF0374 PROTEIN YGAC"/>
    <property type="match status" value="1"/>
</dbReference>
<dbReference type="Pfam" id="PF04167">
    <property type="entry name" value="DUF402"/>
    <property type="match status" value="1"/>
</dbReference>
<dbReference type="SUPFAM" id="SSF159234">
    <property type="entry name" value="FomD-like"/>
    <property type="match status" value="1"/>
</dbReference>
<name>FOMD_STRWE</name>
<evidence type="ECO:0000250" key="1">
    <source>
        <dbReference type="UniProtKB" id="D2SNF7"/>
    </source>
</evidence>
<evidence type="ECO:0000269" key="2">
    <source>
    </source>
</evidence>
<evidence type="ECO:0000303" key="3">
    <source>
    </source>
</evidence>
<evidence type="ECO:0000305" key="4"/>